<proteinExistence type="evidence at transcript level"/>
<keyword id="KW-0025">Alternative splicing</keyword>
<keyword id="KW-1185">Reference proteome</keyword>
<dbReference type="EMBL" id="CR858310">
    <property type="protein sequence ID" value="CAH90547.1"/>
    <property type="molecule type" value="mRNA"/>
</dbReference>
<dbReference type="EMBL" id="CR861256">
    <property type="protein sequence ID" value="CAH93324.1"/>
    <property type="molecule type" value="mRNA"/>
</dbReference>
<dbReference type="RefSeq" id="NP_001125291.1">
    <property type="nucleotide sequence ID" value="NM_001131819.1"/>
</dbReference>
<dbReference type="RefSeq" id="NP_001128904.1">
    <property type="nucleotide sequence ID" value="NM_001135432.1"/>
</dbReference>
<dbReference type="RefSeq" id="XP_009239025.1">
    <property type="nucleotide sequence ID" value="XM_009240750.1"/>
</dbReference>
<dbReference type="FunCoup" id="Q5RCG0">
    <property type="interactions" value="2163"/>
</dbReference>
<dbReference type="STRING" id="9601.ENSPPYP00000017331"/>
<dbReference type="GeneID" id="100172189"/>
<dbReference type="KEGG" id="pon:100172189"/>
<dbReference type="CTD" id="80006"/>
<dbReference type="eggNOG" id="KOG2625">
    <property type="taxonomic scope" value="Eukaryota"/>
</dbReference>
<dbReference type="InParanoid" id="Q5RCG0"/>
<dbReference type="OrthoDB" id="10250284at2759"/>
<dbReference type="Proteomes" id="UP000001595">
    <property type="component" value="Unplaced"/>
</dbReference>
<dbReference type="GO" id="GO:1990072">
    <property type="term" value="C:TRAPPIII protein complex"/>
    <property type="evidence" value="ECO:0007669"/>
    <property type="project" value="TreeGrafter"/>
</dbReference>
<dbReference type="InterPro" id="IPR010378">
    <property type="entry name" value="TRAPPC13"/>
</dbReference>
<dbReference type="InterPro" id="IPR055428">
    <property type="entry name" value="TRAPPC13_C"/>
</dbReference>
<dbReference type="InterPro" id="IPR055429">
    <property type="entry name" value="TRAPPC13_M"/>
</dbReference>
<dbReference type="InterPro" id="IPR055427">
    <property type="entry name" value="TRAPPC13_N"/>
</dbReference>
<dbReference type="PANTHER" id="PTHR13134">
    <property type="entry name" value="TRAFFICKING PROTEIN PARTICLE COMPLEX SUBUNIT 13"/>
    <property type="match status" value="1"/>
</dbReference>
<dbReference type="PANTHER" id="PTHR13134:SF3">
    <property type="entry name" value="TRAFFICKING PROTEIN PARTICLE COMPLEX SUBUNIT 13"/>
    <property type="match status" value="1"/>
</dbReference>
<dbReference type="Pfam" id="PF23643">
    <property type="entry name" value="TRAPPC13_C"/>
    <property type="match status" value="1"/>
</dbReference>
<dbReference type="Pfam" id="PF23647">
    <property type="entry name" value="TRAPPC13_M"/>
    <property type="match status" value="1"/>
</dbReference>
<dbReference type="Pfam" id="PF06159">
    <property type="entry name" value="TRAPPC13_N"/>
    <property type="match status" value="1"/>
</dbReference>
<organism>
    <name type="scientific">Pongo abelii</name>
    <name type="common">Sumatran orangutan</name>
    <name type="synonym">Pongo pygmaeus abelii</name>
    <dbReference type="NCBI Taxonomy" id="9601"/>
    <lineage>
        <taxon>Eukaryota</taxon>
        <taxon>Metazoa</taxon>
        <taxon>Chordata</taxon>
        <taxon>Craniata</taxon>
        <taxon>Vertebrata</taxon>
        <taxon>Euteleostomi</taxon>
        <taxon>Mammalia</taxon>
        <taxon>Eutheria</taxon>
        <taxon>Euarchontoglires</taxon>
        <taxon>Primates</taxon>
        <taxon>Haplorrhini</taxon>
        <taxon>Catarrhini</taxon>
        <taxon>Hominidae</taxon>
        <taxon>Pongo</taxon>
    </lineage>
</organism>
<evidence type="ECO:0000250" key="1"/>
<evidence type="ECO:0000303" key="2">
    <source ref="1"/>
</evidence>
<evidence type="ECO:0000305" key="3"/>
<reference key="1">
    <citation type="submission" date="2004-11" db="EMBL/GenBank/DDBJ databases">
        <authorList>
            <consortium name="The German cDNA consortium"/>
        </authorList>
    </citation>
    <scope>NUCLEOTIDE SEQUENCE [LARGE SCALE MRNA] (ISOFORMS 1 AND 2)</scope>
    <source>
        <tissue>Brain cortex</tissue>
        <tissue>Heart</tissue>
    </source>
</reference>
<sequence length="417" mass="46564">MEVNPPKQEHLLALKVMRLTKPTLFTNIPVTCEERDLPGDLFNQLMRDDPSTVNGAEVLMLGEMLTLPQNFGNIFLGETFSSYISVHNDSNQVVKDILVKADLQTSSQRLNLSASNAAVAELKPDCCIDDVIHHEVKEIGTHILVCAVSYTTQAGEKMYFRKFFKFQVLKPLDVKTKFYNAESDLSSVTDEVFLEAQIQNMTTSPMFMEKVSLEPSIMYNVTELNSVSQAGESVSTFGSRAYLQPMDTRQYLYCLKPKKEFAEKAGIIKGVTVIGKLDIVWKTNLGERGRLQTSQLQRMAPGYGDVRLSLEAIPDTVNLEEPFHITCKITNCSERTMDLVLEMCNTNSIHWCGISGRQLGKLHPSSSLCLALTLLSSVQGLQSISGLRLTDTFLKRTYEYDDIAQVCVISSAIKVES</sequence>
<name>TPC13_PONAB</name>
<comment type="subunit">
    <text evidence="1">Part of the multisubunit TRAPP (transport protein particle) complex.</text>
</comment>
<comment type="alternative products">
    <event type="alternative splicing"/>
    <isoform>
        <id>Q5RCG0-1</id>
        <name>1</name>
        <sequence type="displayed"/>
    </isoform>
    <isoform>
        <id>Q5RCG0-2</id>
        <name>2</name>
        <sequence type="described" ref="VSP_031801"/>
    </isoform>
</comment>
<comment type="similarity">
    <text evidence="3">Belongs to the TRAPPC13 family.</text>
</comment>
<accession>Q5RCG0</accession>
<accession>Q5R4J2</accession>
<feature type="chain" id="PRO_0000321549" description="Trafficking protein particle complex subunit 13">
    <location>
        <begin position="1"/>
        <end position="417"/>
    </location>
</feature>
<feature type="splice variant" id="VSP_031801" description="In isoform 2." evidence="2">
    <location>
        <begin position="183"/>
        <end position="188"/>
    </location>
</feature>
<feature type="sequence conflict" description="In Ref. 1; CAH93324." evidence="3" ref="1">
    <original>R</original>
    <variation>K</variation>
    <location>
        <position position="35"/>
    </location>
</feature>
<protein>
    <recommendedName>
        <fullName>Trafficking protein particle complex subunit 13</fullName>
    </recommendedName>
</protein>
<gene>
    <name type="primary">TRAPPC13</name>
</gene>